<sequence>MDSKQSSELVFTVRRQKPELIAPAKPTPREIKFLSDIDDQEGLRFQIPVIQFYHKDSSMGRKDPVKVIKKAIAETLVFYYPFAGRLREGNGRKLMVDCTGEGIMFVEADADVTLEQFGDELQPPFPCLEELLYDVPDSAGVLNCPLLLIQVTRLRCGGFIFALRLNHTMSDAPGLVQFMTAVGEMARGASAPSILPVWCRELLNARNPPQVTCTHHEYDEVRDTKGTIIPLDDMVHKSFFFGPSEVSALRRFVPHHLRKCSTFELLTAVLWRCRTMSLKPDPEEEVRALCIVNARSRFNPPLPTGYYGNAFAFPVAVTTAAKLSKNPLGYALELVKKTKSDVTEEYMKSVADLMVLKGRPHFTVVRTFLVSDVTRGGFGEVDFGWGKAVYGGPAKGGVGAIPGVASFYIPFKNKKGENGIVVPICLPGFAMETFVKELDGMLKVDAPLDNSNYAIIRPAL</sequence>
<gene>
    <name type="primary">HSR201</name>
</gene>
<evidence type="ECO:0000255" key="1"/>
<evidence type="ECO:0000269" key="2">
    <source>
    </source>
</evidence>
<evidence type="ECO:0000269" key="3">
    <source>
    </source>
</evidence>
<evidence type="ECO:0000305" key="4"/>
<organism>
    <name type="scientific">Nicotiana tabacum</name>
    <name type="common">Common tobacco</name>
    <dbReference type="NCBI Taxonomy" id="4097"/>
    <lineage>
        <taxon>Eukaryota</taxon>
        <taxon>Viridiplantae</taxon>
        <taxon>Streptophyta</taxon>
        <taxon>Embryophyta</taxon>
        <taxon>Tracheophyta</taxon>
        <taxon>Spermatophyta</taxon>
        <taxon>Magnoliopsida</taxon>
        <taxon>eudicotyledons</taxon>
        <taxon>Gunneridae</taxon>
        <taxon>Pentapetalae</taxon>
        <taxon>asterids</taxon>
        <taxon>lamiids</taxon>
        <taxon>Solanales</taxon>
        <taxon>Solanaceae</taxon>
        <taxon>Nicotianoideae</taxon>
        <taxon>Nicotianeae</taxon>
        <taxon>Nicotiana</taxon>
    </lineage>
</organism>
<accession>Q8GT20</accession>
<comment type="function">
    <text evidence="2">Probably involved in the formation of volatile ester benzylbenzoate.</text>
</comment>
<comment type="catalytic activity">
    <reaction evidence="2">
        <text>benzyl alcohol + benzoyl-CoA = benzyl benzoate + CoA</text>
        <dbReference type="Rhea" id="RHEA:30411"/>
        <dbReference type="ChEBI" id="CHEBI:17987"/>
        <dbReference type="ChEBI" id="CHEBI:41237"/>
        <dbReference type="ChEBI" id="CHEBI:57287"/>
        <dbReference type="ChEBI" id="CHEBI:57369"/>
        <dbReference type="EC" id="2.3.1.196"/>
    </reaction>
</comment>
<comment type="biophysicochemical properties">
    <kinetics>
        <KM evidence="2">19 uM for benzyl alcohol (with benzoyl-CoA as cosubstrate)</KM>
        <KM evidence="2">35 uM for benzoyl-CoA (with benzyl alcohol as cosubstrate)</KM>
    </kinetics>
</comment>
<comment type="induction">
    <text evidence="3">Up-regulated in the leaf during the hypersensitive reaction provoked by a pathogen infection.</text>
</comment>
<comment type="similarity">
    <text evidence="4">Belongs to the plant acyltransferase family.</text>
</comment>
<dbReference type="EC" id="2.3.1.196"/>
<dbReference type="EMBL" id="AF500202">
    <property type="protein sequence ID" value="AAN09798.1"/>
    <property type="molecule type" value="mRNA"/>
</dbReference>
<dbReference type="RefSeq" id="NP_001312867.1">
    <property type="nucleotide sequence ID" value="NM_001325938.1"/>
</dbReference>
<dbReference type="SMR" id="Q8GT20"/>
<dbReference type="STRING" id="4097.Q8GT20"/>
<dbReference type="PaxDb" id="4097-Q8GT20"/>
<dbReference type="GeneID" id="107814928"/>
<dbReference type="KEGG" id="nta:107814928"/>
<dbReference type="OrthoDB" id="1483986at2759"/>
<dbReference type="BRENDA" id="2.3.1.196">
    <property type="organism ID" value="3645"/>
</dbReference>
<dbReference type="SABIO-RK" id="Q8GT20"/>
<dbReference type="Proteomes" id="UP000084051">
    <property type="component" value="Unplaced"/>
</dbReference>
<dbReference type="GO" id="GO:0016747">
    <property type="term" value="F:acyltransferase activity, transferring groups other than amino-acyl groups"/>
    <property type="evidence" value="ECO:0000318"/>
    <property type="project" value="GO_Central"/>
</dbReference>
<dbReference type="Gene3D" id="3.30.559.10">
    <property type="entry name" value="Chloramphenicol acetyltransferase-like domain"/>
    <property type="match status" value="2"/>
</dbReference>
<dbReference type="InterPro" id="IPR023213">
    <property type="entry name" value="CAT-like_dom_sf"/>
</dbReference>
<dbReference type="InterPro" id="IPR050898">
    <property type="entry name" value="Plant_acyltransferase"/>
</dbReference>
<dbReference type="PANTHER" id="PTHR31147">
    <property type="entry name" value="ACYL TRANSFERASE 4"/>
    <property type="match status" value="1"/>
</dbReference>
<dbReference type="PANTHER" id="PTHR31147:SF66">
    <property type="entry name" value="OS05G0315700 PROTEIN"/>
    <property type="match status" value="1"/>
</dbReference>
<dbReference type="Pfam" id="PF02458">
    <property type="entry name" value="Transferase"/>
    <property type="match status" value="1"/>
</dbReference>
<proteinExistence type="evidence at protein level"/>
<reference key="1">
    <citation type="journal article" date="2002" name="Plant Physiol.">
        <title>Characterization of an acyltransferase capable of synthesizing benzylbenzoate and other volatile esters in flowers and damaged leaves of Clarkia breweri.</title>
        <authorList>
            <person name="D'Auria J.C."/>
            <person name="Chen F."/>
            <person name="Pichersky E."/>
        </authorList>
    </citation>
    <scope>NUCLEOTIDE SEQUENCE [MRNA]</scope>
    <scope>CATALYTIC ACTIVITY</scope>
    <scope>BIOPHYSICOCHEMICAL PROPERTIES</scope>
    <scope>FUNCTION</scope>
</reference>
<reference key="2">
    <citation type="journal article" date="1996" name="Plant Mol. Biol.">
        <title>Characterization of hsr201 and hsr515, two tobacco genes preferentially expressed during the hypersensitive reaction provoked by phytopathogenic bacteria.</title>
        <authorList>
            <person name="Czernic P."/>
            <person name="Huang H.C."/>
            <person name="Marco Y."/>
        </authorList>
    </citation>
    <scope>INDUCTION BY PATHOGEN INFECTION</scope>
</reference>
<feature type="chain" id="PRO_0000409591" description="Benzyl alcohol O-benzoyltransferase">
    <location>
        <begin position="1"/>
        <end position="460"/>
    </location>
</feature>
<feature type="active site" description="Proton acceptor" evidence="1">
    <location>
        <position position="167"/>
    </location>
</feature>
<feature type="active site" description="Proton acceptor" evidence="1">
    <location>
        <position position="382"/>
    </location>
</feature>
<keyword id="KW-0012">Acyltransferase</keyword>
<keyword id="KW-1185">Reference proteome</keyword>
<keyword id="KW-0808">Transferase</keyword>
<protein>
    <recommendedName>
        <fullName>Benzyl alcohol O-benzoyltransferase</fullName>
        <ecNumber>2.3.1.196</ecNumber>
    </recommendedName>
    <alternativeName>
        <fullName>Benzoyl coenzyme A:benzyl alcohol benzoyl transferase</fullName>
    </alternativeName>
</protein>
<name>BEBT_TOBAC</name>